<reference key="1">
    <citation type="journal article" date="2008" name="J. Bacteriol.">
        <title>The complete genome sequence of Thermococcus onnurineus NA1 reveals a mixed heterotrophic and carboxydotrophic metabolism.</title>
        <authorList>
            <person name="Lee H.S."/>
            <person name="Kang S.G."/>
            <person name="Bae S.S."/>
            <person name="Lim J.K."/>
            <person name="Cho Y."/>
            <person name="Kim Y.J."/>
            <person name="Jeon J.H."/>
            <person name="Cha S.-S."/>
            <person name="Kwon K.K."/>
            <person name="Kim H.-T."/>
            <person name="Park C.-J."/>
            <person name="Lee H.-W."/>
            <person name="Kim S.I."/>
            <person name="Chun J."/>
            <person name="Colwell R.R."/>
            <person name="Kim S.-J."/>
            <person name="Lee J.-H."/>
        </authorList>
    </citation>
    <scope>NUCLEOTIDE SEQUENCE [LARGE SCALE GENOMIC DNA]</scope>
    <source>
        <strain>NA1</strain>
    </source>
</reference>
<feature type="chain" id="PRO_1000100485" description="Translation initiation factor 2 subunit alpha">
    <location>
        <begin position="1"/>
        <end position="275"/>
    </location>
</feature>
<feature type="domain" description="S1 motif" evidence="1">
    <location>
        <begin position="12"/>
        <end position="83"/>
    </location>
</feature>
<comment type="function">
    <text evidence="1">eIF-2 functions in the early steps of protein synthesis by forming a ternary complex with GTP and initiator tRNA.</text>
</comment>
<comment type="subunit">
    <text evidence="1">Heterotrimer composed of an alpha, a beta and a gamma chain.</text>
</comment>
<comment type="similarity">
    <text evidence="1">Belongs to the eIF-2-alpha family.</text>
</comment>
<evidence type="ECO:0000255" key="1">
    <source>
        <dbReference type="HAMAP-Rule" id="MF_00231"/>
    </source>
</evidence>
<gene>
    <name evidence="1" type="primary">eif2a</name>
    <name type="ordered locus">TON_0237</name>
</gene>
<name>IF2A_THEON</name>
<proteinExistence type="inferred from homology"/>
<accession>B6YT35</accession>
<organism>
    <name type="scientific">Thermococcus onnurineus (strain NA1)</name>
    <dbReference type="NCBI Taxonomy" id="523850"/>
    <lineage>
        <taxon>Archaea</taxon>
        <taxon>Methanobacteriati</taxon>
        <taxon>Methanobacteriota</taxon>
        <taxon>Thermococci</taxon>
        <taxon>Thermococcales</taxon>
        <taxon>Thermococcaceae</taxon>
        <taxon>Thermococcus</taxon>
    </lineage>
</organism>
<sequence>MPRKAKEYPEEGEFVIATVKSIHPYGAFLKLDEYPGKEGFMHISEVASTWVKNIRDYVKEGQKVVAKVIRVDPNKGHIDLSLKRVNQQQRKAKLQEYKRAQKAENLLKMAAEKLGKDFEMAWQEVWVPLEEEYGEVYAAFEDAAQNGIEVLKGIIPEEWLEPLNEIVQNYVEVPTVTIDAEFEITVPKPNGIEIIKEALIRARDRVNEDKDIEVKFTYQGAPRYRIDITAPDYYKAEEVLEDIAEEILRVIKQAGGEATLLRKEKRIKKIKRRGA</sequence>
<protein>
    <recommendedName>
        <fullName evidence="1">Translation initiation factor 2 subunit alpha</fullName>
    </recommendedName>
    <alternativeName>
        <fullName evidence="1">aIF2-alpha</fullName>
    </alternativeName>
    <alternativeName>
        <fullName evidence="1">eIF-2-alpha</fullName>
    </alternativeName>
</protein>
<dbReference type="EMBL" id="CP000855">
    <property type="protein sequence ID" value="ACJ15722.1"/>
    <property type="molecule type" value="Genomic_DNA"/>
</dbReference>
<dbReference type="RefSeq" id="WP_012571195.1">
    <property type="nucleotide sequence ID" value="NC_011529.1"/>
</dbReference>
<dbReference type="SMR" id="B6YT35"/>
<dbReference type="STRING" id="523850.TON_0237"/>
<dbReference type="GeneID" id="7017899"/>
<dbReference type="KEGG" id="ton:TON_0237"/>
<dbReference type="PATRIC" id="fig|523850.10.peg.239"/>
<dbReference type="eggNOG" id="arCOG04107">
    <property type="taxonomic scope" value="Archaea"/>
</dbReference>
<dbReference type="HOGENOM" id="CLU_033458_0_2_2"/>
<dbReference type="OrthoDB" id="84794at2157"/>
<dbReference type="Proteomes" id="UP000002727">
    <property type="component" value="Chromosome"/>
</dbReference>
<dbReference type="GO" id="GO:0043022">
    <property type="term" value="F:ribosome binding"/>
    <property type="evidence" value="ECO:0007669"/>
    <property type="project" value="TreeGrafter"/>
</dbReference>
<dbReference type="GO" id="GO:0003723">
    <property type="term" value="F:RNA binding"/>
    <property type="evidence" value="ECO:0007669"/>
    <property type="project" value="UniProtKB-UniRule"/>
</dbReference>
<dbReference type="GO" id="GO:0003743">
    <property type="term" value="F:translation initiation factor activity"/>
    <property type="evidence" value="ECO:0007669"/>
    <property type="project" value="UniProtKB-UniRule"/>
</dbReference>
<dbReference type="CDD" id="cd04452">
    <property type="entry name" value="S1_IF2_alpha"/>
    <property type="match status" value="1"/>
</dbReference>
<dbReference type="FunFam" id="2.40.50.140:FF:000015">
    <property type="entry name" value="Eukaryotic translation initiation factor 2 subunit alpha"/>
    <property type="match status" value="1"/>
</dbReference>
<dbReference type="FunFam" id="1.10.150.190:FF:000006">
    <property type="entry name" value="Translation initiation factor 2 subunit alpha"/>
    <property type="match status" value="1"/>
</dbReference>
<dbReference type="FunFam" id="3.30.70.1130:FF:000002">
    <property type="entry name" value="Translation initiation factor 2 subunit alpha"/>
    <property type="match status" value="1"/>
</dbReference>
<dbReference type="Gene3D" id="3.30.70.1130">
    <property type="entry name" value="EIF_2_alpha"/>
    <property type="match status" value="1"/>
</dbReference>
<dbReference type="Gene3D" id="2.40.50.140">
    <property type="entry name" value="Nucleic acid-binding proteins"/>
    <property type="match status" value="1"/>
</dbReference>
<dbReference type="Gene3D" id="1.10.150.190">
    <property type="entry name" value="Translation initiation factor 2, subunit 1, domain 2"/>
    <property type="match status" value="1"/>
</dbReference>
<dbReference type="HAMAP" id="MF_00231">
    <property type="entry name" value="eIF_2_alpha"/>
    <property type="match status" value="1"/>
</dbReference>
<dbReference type="InterPro" id="IPR012340">
    <property type="entry name" value="NA-bd_OB-fold"/>
</dbReference>
<dbReference type="InterPro" id="IPR003029">
    <property type="entry name" value="S1_domain"/>
</dbReference>
<dbReference type="InterPro" id="IPR044126">
    <property type="entry name" value="S1_IF2_alpha"/>
</dbReference>
<dbReference type="InterPro" id="IPR022964">
    <property type="entry name" value="TIF2_asu_arc"/>
</dbReference>
<dbReference type="InterPro" id="IPR024055">
    <property type="entry name" value="TIF2_asu_C"/>
</dbReference>
<dbReference type="InterPro" id="IPR024054">
    <property type="entry name" value="TIF2_asu_middle_sf"/>
</dbReference>
<dbReference type="InterPro" id="IPR011488">
    <property type="entry name" value="TIF_2_asu"/>
</dbReference>
<dbReference type="NCBIfam" id="NF003062">
    <property type="entry name" value="PRK03987.1-1"/>
    <property type="match status" value="1"/>
</dbReference>
<dbReference type="NCBIfam" id="NF003064">
    <property type="entry name" value="PRK03987.1-4"/>
    <property type="match status" value="1"/>
</dbReference>
<dbReference type="NCBIfam" id="NF003066">
    <property type="entry name" value="PRK03987.1-6"/>
    <property type="match status" value="1"/>
</dbReference>
<dbReference type="PANTHER" id="PTHR10602">
    <property type="entry name" value="EUKARYOTIC TRANSLATION INITIATION FACTOR 2 SUBUNIT 1"/>
    <property type="match status" value="1"/>
</dbReference>
<dbReference type="PANTHER" id="PTHR10602:SF0">
    <property type="entry name" value="EUKARYOTIC TRANSLATION INITIATION FACTOR 2 SUBUNIT 1"/>
    <property type="match status" value="1"/>
</dbReference>
<dbReference type="Pfam" id="PF07541">
    <property type="entry name" value="EIF_2_alpha"/>
    <property type="match status" value="1"/>
</dbReference>
<dbReference type="Pfam" id="PF00575">
    <property type="entry name" value="S1"/>
    <property type="match status" value="1"/>
</dbReference>
<dbReference type="SMART" id="SM00316">
    <property type="entry name" value="S1"/>
    <property type="match status" value="1"/>
</dbReference>
<dbReference type="SUPFAM" id="SSF110993">
    <property type="entry name" value="eIF-2-alpha, C-terminal domain"/>
    <property type="match status" value="1"/>
</dbReference>
<dbReference type="SUPFAM" id="SSF116742">
    <property type="entry name" value="eIF2alpha middle domain-like"/>
    <property type="match status" value="1"/>
</dbReference>
<dbReference type="SUPFAM" id="SSF50249">
    <property type="entry name" value="Nucleic acid-binding proteins"/>
    <property type="match status" value="1"/>
</dbReference>
<dbReference type="PROSITE" id="PS50126">
    <property type="entry name" value="S1"/>
    <property type="match status" value="1"/>
</dbReference>
<keyword id="KW-0396">Initiation factor</keyword>
<keyword id="KW-0648">Protein biosynthesis</keyword>
<keyword id="KW-0694">RNA-binding</keyword>